<accession>Q2KDA7</accession>
<evidence type="ECO:0000255" key="1">
    <source>
        <dbReference type="HAMAP-Rule" id="MF_00500"/>
    </source>
</evidence>
<evidence type="ECO:0000256" key="2">
    <source>
        <dbReference type="SAM" id="MobiDB-lite"/>
    </source>
</evidence>
<evidence type="ECO:0000305" key="3"/>
<gene>
    <name evidence="1" type="primary">rpsT</name>
    <name type="ordered locus">RHE_CH00357</name>
</gene>
<comment type="function">
    <text evidence="1">Binds directly to 16S ribosomal RNA.</text>
</comment>
<comment type="similarity">
    <text evidence="1">Belongs to the bacterial ribosomal protein bS20 family.</text>
</comment>
<sequence>MANTTSAKKATRKIARRTDVNKARRSRVRTFVRQVEEAIASGDADKAKAAFLAAQPELARAASKGVLHSNTASRKVSRLAARVKALSVSPTA</sequence>
<reference key="1">
    <citation type="journal article" date="2006" name="Proc. Natl. Acad. Sci. U.S.A.">
        <title>The partitioned Rhizobium etli genome: genetic and metabolic redundancy in seven interacting replicons.</title>
        <authorList>
            <person name="Gonzalez V."/>
            <person name="Santamaria R.I."/>
            <person name="Bustos P."/>
            <person name="Hernandez-Gonzalez I."/>
            <person name="Medrano-Soto A."/>
            <person name="Moreno-Hagelsieb G."/>
            <person name="Janga S.C."/>
            <person name="Ramirez M.A."/>
            <person name="Jimenez-Jacinto V."/>
            <person name="Collado-Vides J."/>
            <person name="Davila G."/>
        </authorList>
    </citation>
    <scope>NUCLEOTIDE SEQUENCE [LARGE SCALE GENOMIC DNA]</scope>
    <source>
        <strain>ATCC 51251 / DSM 11541 / JCM 21823 / NBRC 15573 / CFN 42</strain>
    </source>
</reference>
<feature type="chain" id="PRO_0000260133" description="Small ribosomal subunit protein bS20">
    <location>
        <begin position="1"/>
        <end position="92"/>
    </location>
</feature>
<feature type="region of interest" description="Disordered" evidence="2">
    <location>
        <begin position="1"/>
        <end position="24"/>
    </location>
</feature>
<protein>
    <recommendedName>
        <fullName evidence="1">Small ribosomal subunit protein bS20</fullName>
    </recommendedName>
    <alternativeName>
        <fullName evidence="3">30S ribosomal protein S20</fullName>
    </alternativeName>
</protein>
<dbReference type="EMBL" id="CP000133">
    <property type="protein sequence ID" value="ABC89179.1"/>
    <property type="molecule type" value="Genomic_DNA"/>
</dbReference>
<dbReference type="RefSeq" id="WP_011423741.1">
    <property type="nucleotide sequence ID" value="NC_007761.1"/>
</dbReference>
<dbReference type="SMR" id="Q2KDA7"/>
<dbReference type="eggNOG" id="COG0268">
    <property type="taxonomic scope" value="Bacteria"/>
</dbReference>
<dbReference type="HOGENOM" id="CLU_160655_3_0_5"/>
<dbReference type="OrthoDB" id="9807974at2"/>
<dbReference type="Proteomes" id="UP000001936">
    <property type="component" value="Chromosome"/>
</dbReference>
<dbReference type="GO" id="GO:0005829">
    <property type="term" value="C:cytosol"/>
    <property type="evidence" value="ECO:0007669"/>
    <property type="project" value="TreeGrafter"/>
</dbReference>
<dbReference type="GO" id="GO:0015935">
    <property type="term" value="C:small ribosomal subunit"/>
    <property type="evidence" value="ECO:0007669"/>
    <property type="project" value="TreeGrafter"/>
</dbReference>
<dbReference type="GO" id="GO:0070181">
    <property type="term" value="F:small ribosomal subunit rRNA binding"/>
    <property type="evidence" value="ECO:0007669"/>
    <property type="project" value="TreeGrafter"/>
</dbReference>
<dbReference type="GO" id="GO:0003735">
    <property type="term" value="F:structural constituent of ribosome"/>
    <property type="evidence" value="ECO:0007669"/>
    <property type="project" value="InterPro"/>
</dbReference>
<dbReference type="GO" id="GO:0006412">
    <property type="term" value="P:translation"/>
    <property type="evidence" value="ECO:0007669"/>
    <property type="project" value="UniProtKB-UniRule"/>
</dbReference>
<dbReference type="FunFam" id="1.20.58.110:FF:000001">
    <property type="entry name" value="30S ribosomal protein S20"/>
    <property type="match status" value="1"/>
</dbReference>
<dbReference type="Gene3D" id="1.20.58.110">
    <property type="entry name" value="Ribosomal protein S20"/>
    <property type="match status" value="1"/>
</dbReference>
<dbReference type="HAMAP" id="MF_00500">
    <property type="entry name" value="Ribosomal_bS20"/>
    <property type="match status" value="1"/>
</dbReference>
<dbReference type="InterPro" id="IPR002583">
    <property type="entry name" value="Ribosomal_bS20"/>
</dbReference>
<dbReference type="InterPro" id="IPR036510">
    <property type="entry name" value="Ribosomal_bS20_sf"/>
</dbReference>
<dbReference type="NCBIfam" id="TIGR00029">
    <property type="entry name" value="S20"/>
    <property type="match status" value="1"/>
</dbReference>
<dbReference type="PANTHER" id="PTHR33398">
    <property type="entry name" value="30S RIBOSOMAL PROTEIN S20"/>
    <property type="match status" value="1"/>
</dbReference>
<dbReference type="PANTHER" id="PTHR33398:SF1">
    <property type="entry name" value="SMALL RIBOSOMAL SUBUNIT PROTEIN BS20C"/>
    <property type="match status" value="1"/>
</dbReference>
<dbReference type="Pfam" id="PF01649">
    <property type="entry name" value="Ribosomal_S20p"/>
    <property type="match status" value="1"/>
</dbReference>
<dbReference type="SUPFAM" id="SSF46992">
    <property type="entry name" value="Ribosomal protein S20"/>
    <property type="match status" value="1"/>
</dbReference>
<name>RS20_RHIEC</name>
<organism>
    <name type="scientific">Rhizobium etli (strain ATCC 51251 / DSM 11541 / JCM 21823 / NBRC 15573 / CFN 42)</name>
    <dbReference type="NCBI Taxonomy" id="347834"/>
    <lineage>
        <taxon>Bacteria</taxon>
        <taxon>Pseudomonadati</taxon>
        <taxon>Pseudomonadota</taxon>
        <taxon>Alphaproteobacteria</taxon>
        <taxon>Hyphomicrobiales</taxon>
        <taxon>Rhizobiaceae</taxon>
        <taxon>Rhizobium/Agrobacterium group</taxon>
        <taxon>Rhizobium</taxon>
    </lineage>
</organism>
<keyword id="KW-1185">Reference proteome</keyword>
<keyword id="KW-0687">Ribonucleoprotein</keyword>
<keyword id="KW-0689">Ribosomal protein</keyword>
<keyword id="KW-0694">RNA-binding</keyword>
<keyword id="KW-0699">rRNA-binding</keyword>
<proteinExistence type="inferred from homology"/>